<feature type="chain" id="PRO_0000165880" description="Chloramphenicol acetyltransferase">
    <location>
        <begin position="1"/>
        <end position="216"/>
    </location>
</feature>
<feature type="active site" description="Proton acceptor" evidence="2">
    <location>
        <position position="186"/>
    </location>
</feature>
<keyword id="KW-0012">Acyltransferase</keyword>
<keyword id="KW-0046">Antibiotic resistance</keyword>
<keyword id="KW-0614">Plasmid</keyword>
<keyword id="KW-0808">Transferase</keyword>
<proteinExistence type="inferred from homology"/>
<dbReference type="EC" id="2.3.1.28"/>
<dbReference type="EMBL" id="S48276">
    <property type="protein sequence ID" value="AAB23649.1"/>
    <property type="molecule type" value="Genomic_DNA"/>
</dbReference>
<dbReference type="SMR" id="P49417"/>
<dbReference type="CARD" id="ARO:3004460">
    <property type="molecule name" value="Vang_ACT_CHL"/>
    <property type="mechanism identifier" value="ARO:0001004"/>
    <property type="mechanism name" value="antibiotic inactivation"/>
</dbReference>
<dbReference type="KEGG" id="ag:AAB23649"/>
<dbReference type="GO" id="GO:0008811">
    <property type="term" value="F:chloramphenicol O-acetyltransferase activity"/>
    <property type="evidence" value="ECO:0007669"/>
    <property type="project" value="UniProtKB-EC"/>
</dbReference>
<dbReference type="GO" id="GO:0046677">
    <property type="term" value="P:response to antibiotic"/>
    <property type="evidence" value="ECO:0007669"/>
    <property type="project" value="UniProtKB-KW"/>
</dbReference>
<dbReference type="Gene3D" id="3.30.559.10">
    <property type="entry name" value="Chloramphenicol acetyltransferase-like domain"/>
    <property type="match status" value="1"/>
</dbReference>
<dbReference type="InterPro" id="IPR023213">
    <property type="entry name" value="CAT-like_dom_sf"/>
</dbReference>
<dbReference type="InterPro" id="IPR018372">
    <property type="entry name" value="Chloramphenicol_AcTrfase_AS"/>
</dbReference>
<dbReference type="InterPro" id="IPR001707">
    <property type="entry name" value="Cmp_AcTrfase"/>
</dbReference>
<dbReference type="NCBIfam" id="NF000491">
    <property type="entry name" value="chloram_CatA"/>
    <property type="match status" value="1"/>
</dbReference>
<dbReference type="PANTHER" id="PTHR38474:SF2">
    <property type="entry name" value="CHLORAMPHENICOL ACETYLTRANSFERASE"/>
    <property type="match status" value="1"/>
</dbReference>
<dbReference type="PANTHER" id="PTHR38474">
    <property type="entry name" value="SLR0299 PROTEIN"/>
    <property type="match status" value="1"/>
</dbReference>
<dbReference type="Pfam" id="PF00302">
    <property type="entry name" value="CAT"/>
    <property type="match status" value="1"/>
</dbReference>
<dbReference type="PIRSF" id="PIRSF000440">
    <property type="entry name" value="CAT"/>
    <property type="match status" value="1"/>
</dbReference>
<dbReference type="SMART" id="SM01059">
    <property type="entry name" value="CAT"/>
    <property type="match status" value="1"/>
</dbReference>
<dbReference type="SUPFAM" id="SSF52777">
    <property type="entry name" value="CoA-dependent acyltransferases"/>
    <property type="match status" value="1"/>
</dbReference>
<dbReference type="PROSITE" id="PS00100">
    <property type="entry name" value="CAT"/>
    <property type="match status" value="1"/>
</dbReference>
<organism>
    <name type="scientific">Vibrio anguillarum</name>
    <name type="common">Listonella anguillarum</name>
    <dbReference type="NCBI Taxonomy" id="55601"/>
    <lineage>
        <taxon>Bacteria</taxon>
        <taxon>Pseudomonadati</taxon>
        <taxon>Pseudomonadota</taxon>
        <taxon>Gammaproteobacteria</taxon>
        <taxon>Vibrionales</taxon>
        <taxon>Vibrionaceae</taxon>
        <taxon>Vibrio</taxon>
    </lineage>
</organism>
<comment type="function">
    <text>This enzyme is an effector of chloramphenicol resistance in bacteria.</text>
</comment>
<comment type="catalytic activity">
    <reaction evidence="2">
        <text>chloramphenicol + acetyl-CoA = chloramphenicol 3-acetate + CoA</text>
        <dbReference type="Rhea" id="RHEA:18421"/>
        <dbReference type="ChEBI" id="CHEBI:16730"/>
        <dbReference type="ChEBI" id="CHEBI:17698"/>
        <dbReference type="ChEBI" id="CHEBI:57287"/>
        <dbReference type="ChEBI" id="CHEBI:57288"/>
        <dbReference type="EC" id="2.3.1.28"/>
    </reaction>
</comment>
<comment type="subunit">
    <text evidence="1">Homotrimer.</text>
</comment>
<comment type="similarity">
    <text evidence="3">Belongs to the chloramphenicol acetyltransferase family.</text>
</comment>
<sequence length="216" mass="25471">MEFRLVDLKTWKRKEYFTHYFESVPCTYSMTVKLDITTIKTGKAKLYPALLYAVSTVVNRHEEFRMTVDDEGQIGIFSEMMPCYTIFQKDTEMFSNIWTEYIGDYTEFCKQYEKDMQQYGENKGMMAKPNPPVNTFPVSMIPWTTFEGFNLNLQKGYGYLLPIFTFGRYYEENGKYWIPLSIQVHHAVCDGFHTCRFINELQDVIQSLQNHGGDEE</sequence>
<gene>
    <name type="primary">cat</name>
</gene>
<evidence type="ECO:0000250" key="1"/>
<evidence type="ECO:0000255" key="2">
    <source>
        <dbReference type="PROSITE-ProRule" id="PRU10021"/>
    </source>
</evidence>
<evidence type="ECO:0000305" key="3"/>
<protein>
    <recommendedName>
        <fullName>Chloramphenicol acetyltransferase</fullName>
        <shortName>CAT</shortName>
        <ecNumber>2.3.1.28</ecNumber>
    </recommendedName>
</protein>
<reference key="1">
    <citation type="journal article" date="1992" name="Microbiol. Immunol.">
        <title>Cloning and nucleotide sequence analysis of a chloramphenicol acetyltransferase gene from Vibrio anguillarum.</title>
        <authorList>
            <person name="Zhao J."/>
            <person name="Aoki T."/>
        </authorList>
    </citation>
    <scope>NUCLEOTIDE SEQUENCE [GENOMIC DNA]</scope>
    <source>
        <strain>PT24</strain>
    </source>
</reference>
<accession>P49417</accession>
<name>CAT_VIBAN</name>
<geneLocation type="plasmid">
    <name>pJA7324</name>
</geneLocation>